<gene>
    <name evidence="2" type="primary">tuf</name>
    <name type="ordered locus">Noca_3922</name>
</gene>
<sequence length="397" mass="43853">MAKAKFERTKPHVNIGTIGHIDHGKTTLTAAITKVLHDKYPDLNPFTPFDEIDKAPEERQRGITISIAHVEYQTESRHYAHVDCPGHADYIKNMITGAAQMDGAILVVAATDGPMPQTREHVLLARQVGVPALVVALNKCDMVDDEELIELVEMEVRELLSEYEFPGDDIPVVRVAAFPALNGDAKWGESVLELMNAVDEYIPTPERDTEKPFLMPVEDVFTITGRGTVITGRIERGIVKVGEEVEILGIREASQKSTVTGVEMFRKLLDEGQAGENVGLLLRGTKREDVERGMVVAKPGTTTPHTNFEASVYILSKEEGGRHTPFFNNYRPQFYFRTTDVTGVVTLPEGTEMVMPGDNTEMAVELIQPIAMDEGLRFAIREGGRTVGAGRVTKITK</sequence>
<accession>A1SNN5</accession>
<evidence type="ECO:0000250" key="1"/>
<evidence type="ECO:0000255" key="2">
    <source>
        <dbReference type="HAMAP-Rule" id="MF_00118"/>
    </source>
</evidence>
<feature type="chain" id="PRO_1000015714" description="Elongation factor Tu">
    <location>
        <begin position="1"/>
        <end position="397"/>
    </location>
</feature>
<feature type="domain" description="tr-type G">
    <location>
        <begin position="10"/>
        <end position="206"/>
    </location>
</feature>
<feature type="region of interest" description="G1" evidence="1">
    <location>
        <begin position="19"/>
        <end position="26"/>
    </location>
</feature>
<feature type="region of interest" description="G2" evidence="1">
    <location>
        <begin position="62"/>
        <end position="66"/>
    </location>
</feature>
<feature type="region of interest" description="G3" evidence="1">
    <location>
        <begin position="83"/>
        <end position="86"/>
    </location>
</feature>
<feature type="region of interest" description="G4" evidence="1">
    <location>
        <begin position="138"/>
        <end position="141"/>
    </location>
</feature>
<feature type="region of interest" description="G5" evidence="1">
    <location>
        <begin position="176"/>
        <end position="178"/>
    </location>
</feature>
<feature type="binding site" evidence="2">
    <location>
        <begin position="19"/>
        <end position="26"/>
    </location>
    <ligand>
        <name>GTP</name>
        <dbReference type="ChEBI" id="CHEBI:37565"/>
    </ligand>
</feature>
<feature type="binding site" evidence="2">
    <location>
        <position position="26"/>
    </location>
    <ligand>
        <name>Mg(2+)</name>
        <dbReference type="ChEBI" id="CHEBI:18420"/>
    </ligand>
</feature>
<feature type="binding site" evidence="2">
    <location>
        <begin position="83"/>
        <end position="87"/>
    </location>
    <ligand>
        <name>GTP</name>
        <dbReference type="ChEBI" id="CHEBI:37565"/>
    </ligand>
</feature>
<feature type="binding site" evidence="2">
    <location>
        <begin position="138"/>
        <end position="141"/>
    </location>
    <ligand>
        <name>GTP</name>
        <dbReference type="ChEBI" id="CHEBI:37565"/>
    </ligand>
</feature>
<dbReference type="EC" id="3.6.5.3" evidence="2"/>
<dbReference type="EMBL" id="CP000509">
    <property type="protein sequence ID" value="ABL83420.1"/>
    <property type="molecule type" value="Genomic_DNA"/>
</dbReference>
<dbReference type="RefSeq" id="WP_011757350.1">
    <property type="nucleotide sequence ID" value="NC_008699.1"/>
</dbReference>
<dbReference type="SMR" id="A1SNN5"/>
<dbReference type="STRING" id="196162.Noca_3922"/>
<dbReference type="KEGG" id="nca:Noca_3922"/>
<dbReference type="eggNOG" id="COG0050">
    <property type="taxonomic scope" value="Bacteria"/>
</dbReference>
<dbReference type="HOGENOM" id="CLU_007265_0_1_11"/>
<dbReference type="OrthoDB" id="9803139at2"/>
<dbReference type="Proteomes" id="UP000000640">
    <property type="component" value="Chromosome"/>
</dbReference>
<dbReference type="GO" id="GO:0005829">
    <property type="term" value="C:cytosol"/>
    <property type="evidence" value="ECO:0007669"/>
    <property type="project" value="TreeGrafter"/>
</dbReference>
<dbReference type="GO" id="GO:0005525">
    <property type="term" value="F:GTP binding"/>
    <property type="evidence" value="ECO:0007669"/>
    <property type="project" value="UniProtKB-UniRule"/>
</dbReference>
<dbReference type="GO" id="GO:0003924">
    <property type="term" value="F:GTPase activity"/>
    <property type="evidence" value="ECO:0007669"/>
    <property type="project" value="InterPro"/>
</dbReference>
<dbReference type="GO" id="GO:0003746">
    <property type="term" value="F:translation elongation factor activity"/>
    <property type="evidence" value="ECO:0007669"/>
    <property type="project" value="UniProtKB-UniRule"/>
</dbReference>
<dbReference type="CDD" id="cd01884">
    <property type="entry name" value="EF_Tu"/>
    <property type="match status" value="1"/>
</dbReference>
<dbReference type="CDD" id="cd03697">
    <property type="entry name" value="EFTU_II"/>
    <property type="match status" value="1"/>
</dbReference>
<dbReference type="CDD" id="cd03707">
    <property type="entry name" value="EFTU_III"/>
    <property type="match status" value="1"/>
</dbReference>
<dbReference type="FunFam" id="2.40.30.10:FF:000001">
    <property type="entry name" value="Elongation factor Tu"/>
    <property type="match status" value="1"/>
</dbReference>
<dbReference type="FunFam" id="3.40.50.300:FF:000003">
    <property type="entry name" value="Elongation factor Tu"/>
    <property type="match status" value="1"/>
</dbReference>
<dbReference type="Gene3D" id="3.40.50.300">
    <property type="entry name" value="P-loop containing nucleotide triphosphate hydrolases"/>
    <property type="match status" value="1"/>
</dbReference>
<dbReference type="Gene3D" id="2.40.30.10">
    <property type="entry name" value="Translation factors"/>
    <property type="match status" value="2"/>
</dbReference>
<dbReference type="HAMAP" id="MF_00118_B">
    <property type="entry name" value="EF_Tu_B"/>
    <property type="match status" value="1"/>
</dbReference>
<dbReference type="InterPro" id="IPR041709">
    <property type="entry name" value="EF-Tu_GTP-bd"/>
</dbReference>
<dbReference type="InterPro" id="IPR050055">
    <property type="entry name" value="EF-Tu_GTPase"/>
</dbReference>
<dbReference type="InterPro" id="IPR004161">
    <property type="entry name" value="EFTu-like_2"/>
</dbReference>
<dbReference type="InterPro" id="IPR033720">
    <property type="entry name" value="EFTU_2"/>
</dbReference>
<dbReference type="InterPro" id="IPR031157">
    <property type="entry name" value="G_TR_CS"/>
</dbReference>
<dbReference type="InterPro" id="IPR027417">
    <property type="entry name" value="P-loop_NTPase"/>
</dbReference>
<dbReference type="InterPro" id="IPR005225">
    <property type="entry name" value="Small_GTP-bd"/>
</dbReference>
<dbReference type="InterPro" id="IPR000795">
    <property type="entry name" value="T_Tr_GTP-bd_dom"/>
</dbReference>
<dbReference type="InterPro" id="IPR009000">
    <property type="entry name" value="Transl_B-barrel_sf"/>
</dbReference>
<dbReference type="InterPro" id="IPR009001">
    <property type="entry name" value="Transl_elong_EF1A/Init_IF2_C"/>
</dbReference>
<dbReference type="InterPro" id="IPR004541">
    <property type="entry name" value="Transl_elong_EFTu/EF1A_bac/org"/>
</dbReference>
<dbReference type="InterPro" id="IPR004160">
    <property type="entry name" value="Transl_elong_EFTu/EF1A_C"/>
</dbReference>
<dbReference type="NCBIfam" id="TIGR00485">
    <property type="entry name" value="EF-Tu"/>
    <property type="match status" value="1"/>
</dbReference>
<dbReference type="NCBIfam" id="NF000766">
    <property type="entry name" value="PRK00049.1"/>
    <property type="match status" value="1"/>
</dbReference>
<dbReference type="NCBIfam" id="NF009372">
    <property type="entry name" value="PRK12735.1"/>
    <property type="match status" value="1"/>
</dbReference>
<dbReference type="NCBIfam" id="NF009373">
    <property type="entry name" value="PRK12736.1"/>
    <property type="match status" value="1"/>
</dbReference>
<dbReference type="NCBIfam" id="TIGR00231">
    <property type="entry name" value="small_GTP"/>
    <property type="match status" value="1"/>
</dbReference>
<dbReference type="PANTHER" id="PTHR43721:SF22">
    <property type="entry name" value="ELONGATION FACTOR TU, MITOCHONDRIAL"/>
    <property type="match status" value="1"/>
</dbReference>
<dbReference type="PANTHER" id="PTHR43721">
    <property type="entry name" value="ELONGATION FACTOR TU-RELATED"/>
    <property type="match status" value="1"/>
</dbReference>
<dbReference type="Pfam" id="PF00009">
    <property type="entry name" value="GTP_EFTU"/>
    <property type="match status" value="1"/>
</dbReference>
<dbReference type="Pfam" id="PF03144">
    <property type="entry name" value="GTP_EFTU_D2"/>
    <property type="match status" value="1"/>
</dbReference>
<dbReference type="Pfam" id="PF03143">
    <property type="entry name" value="GTP_EFTU_D3"/>
    <property type="match status" value="1"/>
</dbReference>
<dbReference type="PRINTS" id="PR00315">
    <property type="entry name" value="ELONGATNFCT"/>
</dbReference>
<dbReference type="SUPFAM" id="SSF50465">
    <property type="entry name" value="EF-Tu/eEF-1alpha/eIF2-gamma C-terminal domain"/>
    <property type="match status" value="1"/>
</dbReference>
<dbReference type="SUPFAM" id="SSF52540">
    <property type="entry name" value="P-loop containing nucleoside triphosphate hydrolases"/>
    <property type="match status" value="1"/>
</dbReference>
<dbReference type="SUPFAM" id="SSF50447">
    <property type="entry name" value="Translation proteins"/>
    <property type="match status" value="1"/>
</dbReference>
<dbReference type="PROSITE" id="PS00301">
    <property type="entry name" value="G_TR_1"/>
    <property type="match status" value="1"/>
</dbReference>
<dbReference type="PROSITE" id="PS51722">
    <property type="entry name" value="G_TR_2"/>
    <property type="match status" value="1"/>
</dbReference>
<organism>
    <name type="scientific">Nocardioides sp. (strain ATCC BAA-499 / JS614)</name>
    <dbReference type="NCBI Taxonomy" id="196162"/>
    <lineage>
        <taxon>Bacteria</taxon>
        <taxon>Bacillati</taxon>
        <taxon>Actinomycetota</taxon>
        <taxon>Actinomycetes</taxon>
        <taxon>Propionibacteriales</taxon>
        <taxon>Nocardioidaceae</taxon>
        <taxon>Nocardioides</taxon>
    </lineage>
</organism>
<keyword id="KW-0963">Cytoplasm</keyword>
<keyword id="KW-0251">Elongation factor</keyword>
<keyword id="KW-0342">GTP-binding</keyword>
<keyword id="KW-0378">Hydrolase</keyword>
<keyword id="KW-0460">Magnesium</keyword>
<keyword id="KW-0479">Metal-binding</keyword>
<keyword id="KW-0547">Nucleotide-binding</keyword>
<keyword id="KW-0648">Protein biosynthesis</keyword>
<keyword id="KW-1185">Reference proteome</keyword>
<name>EFTU_NOCSJ</name>
<proteinExistence type="inferred from homology"/>
<reference key="1">
    <citation type="submission" date="2006-12" db="EMBL/GenBank/DDBJ databases">
        <title>Complete sequence of chromosome 1 of Nocardioides sp. JS614.</title>
        <authorList>
            <person name="Copeland A."/>
            <person name="Lucas S."/>
            <person name="Lapidus A."/>
            <person name="Barry K."/>
            <person name="Detter J.C."/>
            <person name="Glavina del Rio T."/>
            <person name="Hammon N."/>
            <person name="Israni S."/>
            <person name="Dalin E."/>
            <person name="Tice H."/>
            <person name="Pitluck S."/>
            <person name="Thompson L.S."/>
            <person name="Brettin T."/>
            <person name="Bruce D."/>
            <person name="Han C."/>
            <person name="Tapia R."/>
            <person name="Schmutz J."/>
            <person name="Larimer F."/>
            <person name="Land M."/>
            <person name="Hauser L."/>
            <person name="Kyrpides N."/>
            <person name="Kim E."/>
            <person name="Mattes T."/>
            <person name="Gossett J."/>
            <person name="Richardson P."/>
        </authorList>
    </citation>
    <scope>NUCLEOTIDE SEQUENCE [LARGE SCALE GENOMIC DNA]</scope>
    <source>
        <strain>ATCC BAA-499 / JS614</strain>
    </source>
</reference>
<comment type="function">
    <text evidence="2">GTP hydrolase that promotes the GTP-dependent binding of aminoacyl-tRNA to the A-site of ribosomes during protein biosynthesis.</text>
</comment>
<comment type="catalytic activity">
    <reaction evidence="2">
        <text>GTP + H2O = GDP + phosphate + H(+)</text>
        <dbReference type="Rhea" id="RHEA:19669"/>
        <dbReference type="ChEBI" id="CHEBI:15377"/>
        <dbReference type="ChEBI" id="CHEBI:15378"/>
        <dbReference type="ChEBI" id="CHEBI:37565"/>
        <dbReference type="ChEBI" id="CHEBI:43474"/>
        <dbReference type="ChEBI" id="CHEBI:58189"/>
        <dbReference type="EC" id="3.6.5.3"/>
    </reaction>
    <physiologicalReaction direction="left-to-right" evidence="2">
        <dbReference type="Rhea" id="RHEA:19670"/>
    </physiologicalReaction>
</comment>
<comment type="subunit">
    <text evidence="2">Monomer.</text>
</comment>
<comment type="subcellular location">
    <subcellularLocation>
        <location evidence="2">Cytoplasm</location>
    </subcellularLocation>
</comment>
<comment type="similarity">
    <text evidence="2">Belongs to the TRAFAC class translation factor GTPase superfamily. Classic translation factor GTPase family. EF-Tu/EF-1A subfamily.</text>
</comment>
<protein>
    <recommendedName>
        <fullName evidence="2">Elongation factor Tu</fullName>
        <shortName evidence="2">EF-Tu</shortName>
        <ecNumber evidence="2">3.6.5.3</ecNumber>
    </recommendedName>
</protein>